<dbReference type="EC" id="2.3.2.27"/>
<dbReference type="EMBL" id="AJ001514">
    <property type="protein sequence ID" value="CAA04797.1"/>
    <property type="molecule type" value="mRNA"/>
</dbReference>
<dbReference type="EMBL" id="AE014297">
    <property type="protein sequence ID" value="AAF56737.1"/>
    <property type="molecule type" value="Genomic_DNA"/>
</dbReference>
<dbReference type="EMBL" id="AY058535">
    <property type="protein sequence ID" value="AAL13764.1"/>
    <property type="molecule type" value="mRNA"/>
</dbReference>
<dbReference type="RefSeq" id="NP_477509.1">
    <property type="nucleotide sequence ID" value="NM_058161.4"/>
</dbReference>
<dbReference type="SMR" id="Q9VB08"/>
<dbReference type="BioGRID" id="68209">
    <property type="interactions" value="35"/>
</dbReference>
<dbReference type="ComplexPortal" id="CPX-2427">
    <property type="entry name" value="dRING-associated factors complex"/>
</dbReference>
<dbReference type="ComplexPortal" id="CPX-2578">
    <property type="entry name" value="Polycomb repressive complex 1, Psc variant"/>
</dbReference>
<dbReference type="ComplexPortal" id="CPX-2590">
    <property type="entry name" value="Polycomb repressive complex 1, Su(Z)2 variant"/>
</dbReference>
<dbReference type="DIP" id="DIP-21764N"/>
<dbReference type="FunCoup" id="Q9VB08">
    <property type="interactions" value="1647"/>
</dbReference>
<dbReference type="IntAct" id="Q9VB08">
    <property type="interactions" value="8"/>
</dbReference>
<dbReference type="STRING" id="7227.FBpp0084614"/>
<dbReference type="iPTMnet" id="Q9VB08"/>
<dbReference type="PaxDb" id="7227-FBpp0084614"/>
<dbReference type="DNASU" id="43327"/>
<dbReference type="EnsemblMetazoa" id="FBtr0085245">
    <property type="protein sequence ID" value="FBpp0084614"/>
    <property type="gene ID" value="FBgn0003330"/>
</dbReference>
<dbReference type="GeneID" id="43327"/>
<dbReference type="KEGG" id="dme:Dmel_CG5595"/>
<dbReference type="AGR" id="FB:FBgn0003330"/>
<dbReference type="CTD" id="43327"/>
<dbReference type="FlyBase" id="FBgn0003330">
    <property type="gene designation" value="Sce"/>
</dbReference>
<dbReference type="VEuPathDB" id="VectorBase:FBgn0003330"/>
<dbReference type="eggNOG" id="KOG0311">
    <property type="taxonomic scope" value="Eukaryota"/>
</dbReference>
<dbReference type="HOGENOM" id="CLU_056557_1_1_1"/>
<dbReference type="InParanoid" id="Q9VB08"/>
<dbReference type="OMA" id="WNVNKPL"/>
<dbReference type="OrthoDB" id="337575at2759"/>
<dbReference type="PhylomeDB" id="Q9VB08"/>
<dbReference type="Reactome" id="R-DME-2559580">
    <property type="pathway name" value="Oxidative Stress Induced Senescence"/>
</dbReference>
<dbReference type="Reactome" id="R-DME-3108214">
    <property type="pathway name" value="SUMOylation of DNA damage response and repair proteins"/>
</dbReference>
<dbReference type="Reactome" id="R-DME-3899300">
    <property type="pathway name" value="SUMOylation of transcription cofactors"/>
</dbReference>
<dbReference type="Reactome" id="R-DME-4570464">
    <property type="pathway name" value="SUMOylation of RNA binding proteins"/>
</dbReference>
<dbReference type="Reactome" id="R-DME-8939243">
    <property type="pathway name" value="RUNX1 interacts with co-factors whose precise effect on RUNX1 targets is not known"/>
</dbReference>
<dbReference type="Reactome" id="R-DME-8943724">
    <property type="pathway name" value="Regulation of PTEN gene transcription"/>
</dbReference>
<dbReference type="Reactome" id="R-DME-8953750">
    <property type="pathway name" value="Transcriptional Regulation by E2F6"/>
</dbReference>
<dbReference type="SignaLink" id="Q9VB08"/>
<dbReference type="UniPathway" id="UPA00143"/>
<dbReference type="BioGRID-ORCS" id="43327">
    <property type="hits" value="0 hits in 3 CRISPR screens"/>
</dbReference>
<dbReference type="CD-CODE" id="58FDC23F">
    <property type="entry name" value="PcG body"/>
</dbReference>
<dbReference type="GenomeRNAi" id="43327"/>
<dbReference type="PRO" id="PR:Q9VB08"/>
<dbReference type="Proteomes" id="UP000000803">
    <property type="component" value="Chromosome 3R"/>
</dbReference>
<dbReference type="Bgee" id="FBgn0003330">
    <property type="expression patterns" value="Expressed in T neuron T5c (Drosophila) in embryonic/larval optic lobe (Drosophila) and 76 other cell types or tissues"/>
</dbReference>
<dbReference type="GO" id="GO:0000785">
    <property type="term" value="C:chromatin"/>
    <property type="evidence" value="ECO:0000314"/>
    <property type="project" value="UniProtKB"/>
</dbReference>
<dbReference type="GO" id="GO:0005635">
    <property type="term" value="C:nuclear envelope"/>
    <property type="evidence" value="ECO:0000314"/>
    <property type="project" value="UniProtKB"/>
</dbReference>
<dbReference type="GO" id="GO:0005730">
    <property type="term" value="C:nucleolus"/>
    <property type="evidence" value="ECO:0000314"/>
    <property type="project" value="FlyBase"/>
</dbReference>
<dbReference type="GO" id="GO:0005634">
    <property type="term" value="C:nucleus"/>
    <property type="evidence" value="ECO:0000314"/>
    <property type="project" value="FlyBase"/>
</dbReference>
<dbReference type="GO" id="GO:0031519">
    <property type="term" value="C:PcG protein complex"/>
    <property type="evidence" value="ECO:0000314"/>
    <property type="project" value="FlyBase"/>
</dbReference>
<dbReference type="GO" id="GO:0035102">
    <property type="term" value="C:PRC1 complex"/>
    <property type="evidence" value="ECO:0000314"/>
    <property type="project" value="FlyBase"/>
</dbReference>
<dbReference type="GO" id="GO:0000151">
    <property type="term" value="C:ubiquitin ligase complex"/>
    <property type="evidence" value="ECO:0000318"/>
    <property type="project" value="GO_Central"/>
</dbReference>
<dbReference type="GO" id="GO:0003682">
    <property type="term" value="F:chromatin binding"/>
    <property type="evidence" value="ECO:0000318"/>
    <property type="project" value="GO_Central"/>
</dbReference>
<dbReference type="GO" id="GO:0061630">
    <property type="term" value="F:ubiquitin protein ligase activity"/>
    <property type="evidence" value="ECO:0000315"/>
    <property type="project" value="FlyBase"/>
</dbReference>
<dbReference type="GO" id="GO:0004842">
    <property type="term" value="F:ubiquitin-protein transferase activity"/>
    <property type="evidence" value="ECO:0000250"/>
    <property type="project" value="FlyBase"/>
</dbReference>
<dbReference type="GO" id="GO:0008270">
    <property type="term" value="F:zinc ion binding"/>
    <property type="evidence" value="ECO:0000255"/>
    <property type="project" value="FlyBase"/>
</dbReference>
<dbReference type="GO" id="GO:0009948">
    <property type="term" value="P:anterior/posterior axis specification"/>
    <property type="evidence" value="ECO:0000315"/>
    <property type="project" value="UniProtKB"/>
</dbReference>
<dbReference type="GO" id="GO:0030713">
    <property type="term" value="P:follicle cell of egg chamber stalk formation"/>
    <property type="evidence" value="ECO:0000315"/>
    <property type="project" value="FlyBase"/>
</dbReference>
<dbReference type="GO" id="GO:0030708">
    <property type="term" value="P:germarium-derived female germ-line cyst encapsulation"/>
    <property type="evidence" value="ECO:0000315"/>
    <property type="project" value="FlyBase"/>
</dbReference>
<dbReference type="GO" id="GO:0031507">
    <property type="term" value="P:heterochromatin formation"/>
    <property type="evidence" value="ECO:0000314"/>
    <property type="project" value="UniProtKB"/>
</dbReference>
<dbReference type="GO" id="GO:0051321">
    <property type="term" value="P:meiotic cell cycle"/>
    <property type="evidence" value="ECO:0007669"/>
    <property type="project" value="UniProtKB-KW"/>
</dbReference>
<dbReference type="GO" id="GO:0022008">
    <property type="term" value="P:neurogenesis"/>
    <property type="evidence" value="ECO:0000315"/>
    <property type="project" value="FlyBase"/>
</dbReference>
<dbReference type="GO" id="GO:0016567">
    <property type="term" value="P:protein ubiquitination"/>
    <property type="evidence" value="ECO:0007669"/>
    <property type="project" value="UniProtKB-UniPathway"/>
</dbReference>
<dbReference type="GO" id="GO:0006357">
    <property type="term" value="P:regulation of transcription by RNA polymerase II"/>
    <property type="evidence" value="ECO:0000315"/>
    <property type="project" value="UniProtKB"/>
</dbReference>
<dbReference type="GO" id="GO:0007419">
    <property type="term" value="P:ventral cord development"/>
    <property type="evidence" value="ECO:0007001"/>
    <property type="project" value="FlyBase"/>
</dbReference>
<dbReference type="CDD" id="cd17086">
    <property type="entry name" value="RAWUL_RING1_like"/>
    <property type="match status" value="1"/>
</dbReference>
<dbReference type="CDD" id="cd16739">
    <property type="entry name" value="RING-HC_RING1"/>
    <property type="match status" value="1"/>
</dbReference>
<dbReference type="FunFam" id="3.10.20.90:FF:000219">
    <property type="entry name" value="E3 ubiquitin-protein ligase RING1"/>
    <property type="match status" value="1"/>
</dbReference>
<dbReference type="FunFam" id="3.30.40.10:FF:000100">
    <property type="entry name" value="E3 ubiquitin-protein ligase RING2"/>
    <property type="match status" value="1"/>
</dbReference>
<dbReference type="Gene3D" id="3.10.20.90">
    <property type="entry name" value="Phosphatidylinositol 3-kinase Catalytic Subunit, Chain A, domain 1"/>
    <property type="match status" value="1"/>
</dbReference>
<dbReference type="Gene3D" id="3.30.40.10">
    <property type="entry name" value="Zinc/RING finger domain, C3HC4 (zinc finger)"/>
    <property type="match status" value="1"/>
</dbReference>
<dbReference type="InterPro" id="IPR032443">
    <property type="entry name" value="RAWUL"/>
</dbReference>
<dbReference type="InterPro" id="IPR043540">
    <property type="entry name" value="RING1/RING2"/>
</dbReference>
<dbReference type="InterPro" id="IPR042741">
    <property type="entry name" value="RING1_RING-HC"/>
</dbReference>
<dbReference type="InterPro" id="IPR001841">
    <property type="entry name" value="Znf_RING"/>
</dbReference>
<dbReference type="InterPro" id="IPR013083">
    <property type="entry name" value="Znf_RING/FYVE/PHD"/>
</dbReference>
<dbReference type="InterPro" id="IPR017907">
    <property type="entry name" value="Znf_RING_CS"/>
</dbReference>
<dbReference type="PANTHER" id="PTHR46076:SF3">
    <property type="entry name" value="E3 UBIQUITIN-PROTEIN LIGASE RING1"/>
    <property type="match status" value="1"/>
</dbReference>
<dbReference type="PANTHER" id="PTHR46076">
    <property type="entry name" value="E3 UBIQUITIN-PROTEIN LIGASE RING1 / RING 2 FAMILY MEMBER"/>
    <property type="match status" value="1"/>
</dbReference>
<dbReference type="Pfam" id="PF16207">
    <property type="entry name" value="RAWUL"/>
    <property type="match status" value="1"/>
</dbReference>
<dbReference type="Pfam" id="PF13923">
    <property type="entry name" value="zf-C3HC4_2"/>
    <property type="match status" value="1"/>
</dbReference>
<dbReference type="SMART" id="SM00184">
    <property type="entry name" value="RING"/>
    <property type="match status" value="1"/>
</dbReference>
<dbReference type="SUPFAM" id="SSF57850">
    <property type="entry name" value="RING/U-box"/>
    <property type="match status" value="1"/>
</dbReference>
<dbReference type="PROSITE" id="PS00518">
    <property type="entry name" value="ZF_RING_1"/>
    <property type="match status" value="1"/>
</dbReference>
<dbReference type="PROSITE" id="PS50089">
    <property type="entry name" value="ZF_RING_2"/>
    <property type="match status" value="1"/>
</dbReference>
<organism>
    <name type="scientific">Drosophila melanogaster</name>
    <name type="common">Fruit fly</name>
    <dbReference type="NCBI Taxonomy" id="7227"/>
    <lineage>
        <taxon>Eukaryota</taxon>
        <taxon>Metazoa</taxon>
        <taxon>Ecdysozoa</taxon>
        <taxon>Arthropoda</taxon>
        <taxon>Hexapoda</taxon>
        <taxon>Insecta</taxon>
        <taxon>Pterygota</taxon>
        <taxon>Neoptera</taxon>
        <taxon>Endopterygota</taxon>
        <taxon>Diptera</taxon>
        <taxon>Brachycera</taxon>
        <taxon>Muscomorpha</taxon>
        <taxon>Ephydroidea</taxon>
        <taxon>Drosophilidae</taxon>
        <taxon>Drosophila</taxon>
        <taxon>Sophophora</taxon>
    </lineage>
</organism>
<feature type="chain" id="PRO_0000056113" description="E3 ubiquitin-protein ligase RING1">
    <location>
        <begin position="1"/>
        <end position="435"/>
    </location>
</feature>
<feature type="zinc finger region" description="RING-type" evidence="1">
    <location>
        <begin position="46"/>
        <end position="86"/>
    </location>
</feature>
<feature type="region of interest" description="Disordered" evidence="2">
    <location>
        <begin position="144"/>
        <end position="322"/>
    </location>
</feature>
<feature type="compositionally biased region" description="Gly residues" evidence="2">
    <location>
        <begin position="157"/>
        <end position="170"/>
    </location>
</feature>
<feature type="compositionally biased region" description="Low complexity" evidence="2">
    <location>
        <begin position="171"/>
        <end position="188"/>
    </location>
</feature>
<feature type="compositionally biased region" description="Low complexity" evidence="2">
    <location>
        <begin position="202"/>
        <end position="211"/>
    </location>
</feature>
<feature type="compositionally biased region" description="Low complexity" evidence="2">
    <location>
        <begin position="222"/>
        <end position="251"/>
    </location>
</feature>
<feature type="compositionally biased region" description="Low complexity" evidence="2">
    <location>
        <begin position="259"/>
        <end position="278"/>
    </location>
</feature>
<feature type="compositionally biased region" description="Acidic residues" evidence="2">
    <location>
        <begin position="309"/>
        <end position="322"/>
    </location>
</feature>
<feature type="modified residue" description="Phosphoserine" evidence="10">
    <location>
        <position position="202"/>
    </location>
</feature>
<feature type="modified residue" description="Phosphoserine" evidence="10">
    <location>
        <position position="266"/>
    </location>
</feature>
<feature type="modified residue" description="Phosphothreonine" evidence="10">
    <location>
        <position position="267"/>
    </location>
</feature>
<feature type="modified residue" description="Phosphoserine" evidence="10">
    <location>
        <position position="269"/>
    </location>
</feature>
<feature type="mutagenesis site" description="In Sce33M2; induces extra sex combs due to derepression of Ubx homeotic gene and abolishes ability to ubiquitinate histone H2A." evidence="8">
    <original>R</original>
    <variation>C</variation>
    <location>
        <position position="65"/>
    </location>
</feature>
<feature type="sequence conflict" description="In Ref. 1; CAA04797." evidence="11" ref="1">
    <original>A</original>
    <variation>P</variation>
    <location>
        <position position="176"/>
    </location>
</feature>
<feature type="sequence conflict" description="In Ref. 1; CAA04797." evidence="11" ref="1">
    <original>A</original>
    <variation>P</variation>
    <location>
        <position position="201"/>
    </location>
</feature>
<feature type="sequence conflict" description="In Ref. 1; CAA04797." evidence="11" ref="1">
    <original>K</original>
    <variation>N</variation>
    <location>
        <position position="279"/>
    </location>
</feature>
<accession>Q9VB08</accession>
<accession>O18380</accession>
<protein>
    <recommendedName>
        <fullName>E3 ubiquitin-protein ligase RING1</fullName>
        <ecNumber>2.3.2.27</ecNumber>
    </recommendedName>
    <alternativeName>
        <fullName evidence="11">RING-type E3 ubiquitin transferase RING1</fullName>
    </alternativeName>
    <alternativeName>
        <fullName>Sex comb extra protein</fullName>
    </alternativeName>
    <alternativeName>
        <fullName>dRING protein</fullName>
    </alternativeName>
    <alternativeName>
        <fullName>dRING1</fullName>
    </alternativeName>
</protein>
<name>RING1_DROME</name>
<sequence length="435" mass="47256">MTSLDPAPNKTWELSLYELQRKPQEVITDSTEIAVSPRSLHSELMCPICLDMLKKTMTTKECLHRFCSDCIVTALRSGNKECPTCRKKLVSKRSLRADPNFDLLISKIYPSREEYEAIQEKVMAKFNQTQSQQALVNSINEGIKLQSQNRPQRFRTKGGGGGGGGGGNGNGAANVAAPPAPGAPTAVGRNASNQMHVHDTASNDSNSNTNSIDRENRDPGHSGTSAASAITSASNAAPSSSANSGASTSATRMQVDDASNPPSVRSTPSPVPSNSSSSKPKRAMSVLTSERSEESESDSQMDCRTEGDSNIDTEGEGNGELGINDEIELVFKPHPTEMSADNQLIRALKENCVRYIKTTANATVDHLSKYLAMRLTLDLGADLPEACRVLNFCIYVAPQPQQLVILNGNQTLHQVNDKFWKVNKPMEMYYSWKKT</sequence>
<keyword id="KW-0131">Cell cycle</keyword>
<keyword id="KW-0158">Chromosome</keyword>
<keyword id="KW-0469">Meiosis</keyword>
<keyword id="KW-0479">Metal-binding</keyword>
<keyword id="KW-0539">Nucleus</keyword>
<keyword id="KW-0597">Phosphoprotein</keyword>
<keyword id="KW-1185">Reference proteome</keyword>
<keyword id="KW-0678">Repressor</keyword>
<keyword id="KW-0804">Transcription</keyword>
<keyword id="KW-0805">Transcription regulation</keyword>
<keyword id="KW-0808">Transferase</keyword>
<keyword id="KW-0833">Ubl conjugation pathway</keyword>
<keyword id="KW-0862">Zinc</keyword>
<keyword id="KW-0863">Zinc-finger</keyword>
<evidence type="ECO:0000255" key="1">
    <source>
        <dbReference type="PROSITE-ProRule" id="PRU00175"/>
    </source>
</evidence>
<evidence type="ECO:0000256" key="2">
    <source>
        <dbReference type="SAM" id="MobiDB-lite"/>
    </source>
</evidence>
<evidence type="ECO:0000269" key="3">
    <source>
    </source>
</evidence>
<evidence type="ECO:0000269" key="4">
    <source>
    </source>
</evidence>
<evidence type="ECO:0000269" key="5">
    <source>
    </source>
</evidence>
<evidence type="ECO:0000269" key="6">
    <source>
    </source>
</evidence>
<evidence type="ECO:0000269" key="7">
    <source>
    </source>
</evidence>
<evidence type="ECO:0000269" key="8">
    <source>
    </source>
</evidence>
<evidence type="ECO:0000269" key="9">
    <source>
    </source>
</evidence>
<evidence type="ECO:0000269" key="10">
    <source>
    </source>
</evidence>
<evidence type="ECO:0000305" key="11"/>
<gene>
    <name type="primary">Sce</name>
    <name type="ORF">CG5595</name>
</gene>
<proteinExistence type="evidence at protein level"/>
<comment type="function">
    <text evidence="5 6 8 9">E3 ubiquitin-protein ligase that mediates monoubiquitination of 'Lys-118' of histone H2A, thereby playing a central role in histone code and gene regulation. H2A 'Lys-118' ubiquitination gives a specific tag for epigenetic transcriptional repression. Polycomb group (PcG) protein. PcG proteins act by forming multiprotein complexes, which are required to maintain the transcriptionally repressive state of homeotic genes throughout development. PcG proteins are not required to initiate repression, but to maintain it during later stages of development. PcG complexes act via modification of histones, such as methylation, deacetylation, ubiquitination rendering chromatin heritably changed in its expressibility. May play a role in meiotic sister chromatid cohesion.</text>
</comment>
<comment type="catalytic activity">
    <reaction>
        <text>S-ubiquitinyl-[E2 ubiquitin-conjugating enzyme]-L-cysteine + [acceptor protein]-L-lysine = [E2 ubiquitin-conjugating enzyme]-L-cysteine + N(6)-ubiquitinyl-[acceptor protein]-L-lysine.</text>
        <dbReference type="EC" id="2.3.2.27"/>
    </reaction>
</comment>
<comment type="pathway">
    <text>Protein modification; protein ubiquitination.</text>
</comment>
<comment type="subunit">
    <text evidence="3 4 5 7">Interacts with ORD. Component of PRC1 complex, which contains many PcG proteins like Pc, ph, Scm, Psc, Sce and also chromatin remodeling proteins such as histone deacetylases. This complex is distinct from the Esc/E(z) complex, at least composed of esc, E(z), Su(z)12, HDAC1/Rpd3 and Caf1-55. The two complexes however cooperate and interact together during the first 3 hours of development to establish PcG silencing.</text>
</comment>
<comment type="subcellular location">
    <subcellularLocation>
        <location>Nucleus</location>
    </subcellularLocation>
    <subcellularLocation>
        <location>Chromosome</location>
    </subcellularLocation>
    <text>Colocalizes with ubiquitinated histone H2A. Colocalizes with Pc, Pcl, Psc, ph at many sites on polytene chromosomes. Colocalizes with ORD on the chromatin of primary spermatocytes during G2 of meiosis.</text>
</comment>
<comment type="tissue specificity">
    <text evidence="5 7">Ubiquitously expressed in syncytial blastoderm embryos. Ubiquitously expressed until stage 11. Then, it is only expressed in the neuroectoderm. Later in embryonic development, it is only expressed in the CNS. In larvae, it is expressed in all imaginal disks. Expressed in the male and female gonads.</text>
</comment>
<comment type="developmental stage">
    <text evidence="7">Expressed both maternally and zygotically.</text>
</comment>
<reference key="1">
    <citation type="submission" date="1997-09" db="EMBL/GenBank/DDBJ databases">
        <authorList>
            <person name="Dyer M.J."/>
            <person name="Abdul-Rauf M."/>
            <person name="White R.A.H."/>
        </authorList>
    </citation>
    <scope>NUCLEOTIDE SEQUENCE [MRNA]</scope>
</reference>
<reference key="2">
    <citation type="journal article" date="2000" name="Science">
        <title>The genome sequence of Drosophila melanogaster.</title>
        <authorList>
            <person name="Adams M.D."/>
            <person name="Celniker S.E."/>
            <person name="Holt R.A."/>
            <person name="Evans C.A."/>
            <person name="Gocayne J.D."/>
            <person name="Amanatides P.G."/>
            <person name="Scherer S.E."/>
            <person name="Li P.W."/>
            <person name="Hoskins R.A."/>
            <person name="Galle R.F."/>
            <person name="George R.A."/>
            <person name="Lewis S.E."/>
            <person name="Richards S."/>
            <person name="Ashburner M."/>
            <person name="Henderson S.N."/>
            <person name="Sutton G.G."/>
            <person name="Wortman J.R."/>
            <person name="Yandell M.D."/>
            <person name="Zhang Q."/>
            <person name="Chen L.X."/>
            <person name="Brandon R.C."/>
            <person name="Rogers Y.-H.C."/>
            <person name="Blazej R.G."/>
            <person name="Champe M."/>
            <person name="Pfeiffer B.D."/>
            <person name="Wan K.H."/>
            <person name="Doyle C."/>
            <person name="Baxter E.G."/>
            <person name="Helt G."/>
            <person name="Nelson C.R."/>
            <person name="Miklos G.L.G."/>
            <person name="Abril J.F."/>
            <person name="Agbayani A."/>
            <person name="An H.-J."/>
            <person name="Andrews-Pfannkoch C."/>
            <person name="Baldwin D."/>
            <person name="Ballew R.M."/>
            <person name="Basu A."/>
            <person name="Baxendale J."/>
            <person name="Bayraktaroglu L."/>
            <person name="Beasley E.M."/>
            <person name="Beeson K.Y."/>
            <person name="Benos P.V."/>
            <person name="Berman B.P."/>
            <person name="Bhandari D."/>
            <person name="Bolshakov S."/>
            <person name="Borkova D."/>
            <person name="Botchan M.R."/>
            <person name="Bouck J."/>
            <person name="Brokstein P."/>
            <person name="Brottier P."/>
            <person name="Burtis K.C."/>
            <person name="Busam D.A."/>
            <person name="Butler H."/>
            <person name="Cadieu E."/>
            <person name="Center A."/>
            <person name="Chandra I."/>
            <person name="Cherry J.M."/>
            <person name="Cawley S."/>
            <person name="Dahlke C."/>
            <person name="Davenport L.B."/>
            <person name="Davies P."/>
            <person name="de Pablos B."/>
            <person name="Delcher A."/>
            <person name="Deng Z."/>
            <person name="Mays A.D."/>
            <person name="Dew I."/>
            <person name="Dietz S.M."/>
            <person name="Dodson K."/>
            <person name="Doup L.E."/>
            <person name="Downes M."/>
            <person name="Dugan-Rocha S."/>
            <person name="Dunkov B.C."/>
            <person name="Dunn P."/>
            <person name="Durbin K.J."/>
            <person name="Evangelista C.C."/>
            <person name="Ferraz C."/>
            <person name="Ferriera S."/>
            <person name="Fleischmann W."/>
            <person name="Fosler C."/>
            <person name="Gabrielian A.E."/>
            <person name="Garg N.S."/>
            <person name="Gelbart W.M."/>
            <person name="Glasser K."/>
            <person name="Glodek A."/>
            <person name="Gong F."/>
            <person name="Gorrell J.H."/>
            <person name="Gu Z."/>
            <person name="Guan P."/>
            <person name="Harris M."/>
            <person name="Harris N.L."/>
            <person name="Harvey D.A."/>
            <person name="Heiman T.J."/>
            <person name="Hernandez J.R."/>
            <person name="Houck J."/>
            <person name="Hostin D."/>
            <person name="Houston K.A."/>
            <person name="Howland T.J."/>
            <person name="Wei M.-H."/>
            <person name="Ibegwam C."/>
            <person name="Jalali M."/>
            <person name="Kalush F."/>
            <person name="Karpen G.H."/>
            <person name="Ke Z."/>
            <person name="Kennison J.A."/>
            <person name="Ketchum K.A."/>
            <person name="Kimmel B.E."/>
            <person name="Kodira C.D."/>
            <person name="Kraft C.L."/>
            <person name="Kravitz S."/>
            <person name="Kulp D."/>
            <person name="Lai Z."/>
            <person name="Lasko P."/>
            <person name="Lei Y."/>
            <person name="Levitsky A.A."/>
            <person name="Li J.H."/>
            <person name="Li Z."/>
            <person name="Liang Y."/>
            <person name="Lin X."/>
            <person name="Liu X."/>
            <person name="Mattei B."/>
            <person name="McIntosh T.C."/>
            <person name="McLeod M.P."/>
            <person name="McPherson D."/>
            <person name="Merkulov G."/>
            <person name="Milshina N.V."/>
            <person name="Mobarry C."/>
            <person name="Morris J."/>
            <person name="Moshrefi A."/>
            <person name="Mount S.M."/>
            <person name="Moy M."/>
            <person name="Murphy B."/>
            <person name="Murphy L."/>
            <person name="Muzny D.M."/>
            <person name="Nelson D.L."/>
            <person name="Nelson D.R."/>
            <person name="Nelson K.A."/>
            <person name="Nixon K."/>
            <person name="Nusskern D.R."/>
            <person name="Pacleb J.M."/>
            <person name="Palazzolo M."/>
            <person name="Pittman G.S."/>
            <person name="Pan S."/>
            <person name="Pollard J."/>
            <person name="Puri V."/>
            <person name="Reese M.G."/>
            <person name="Reinert K."/>
            <person name="Remington K."/>
            <person name="Saunders R.D.C."/>
            <person name="Scheeler F."/>
            <person name="Shen H."/>
            <person name="Shue B.C."/>
            <person name="Siden-Kiamos I."/>
            <person name="Simpson M."/>
            <person name="Skupski M.P."/>
            <person name="Smith T.J."/>
            <person name="Spier E."/>
            <person name="Spradling A.C."/>
            <person name="Stapleton M."/>
            <person name="Strong R."/>
            <person name="Sun E."/>
            <person name="Svirskas R."/>
            <person name="Tector C."/>
            <person name="Turner R."/>
            <person name="Venter E."/>
            <person name="Wang A.H."/>
            <person name="Wang X."/>
            <person name="Wang Z.-Y."/>
            <person name="Wassarman D.A."/>
            <person name="Weinstock G.M."/>
            <person name="Weissenbach J."/>
            <person name="Williams S.M."/>
            <person name="Woodage T."/>
            <person name="Worley K.C."/>
            <person name="Wu D."/>
            <person name="Yang S."/>
            <person name="Yao Q.A."/>
            <person name="Ye J."/>
            <person name="Yeh R.-F."/>
            <person name="Zaveri J.S."/>
            <person name="Zhan M."/>
            <person name="Zhang G."/>
            <person name="Zhao Q."/>
            <person name="Zheng L."/>
            <person name="Zheng X.H."/>
            <person name="Zhong F.N."/>
            <person name="Zhong W."/>
            <person name="Zhou X."/>
            <person name="Zhu S.C."/>
            <person name="Zhu X."/>
            <person name="Smith H.O."/>
            <person name="Gibbs R.A."/>
            <person name="Myers E.W."/>
            <person name="Rubin G.M."/>
            <person name="Venter J.C."/>
        </authorList>
    </citation>
    <scope>NUCLEOTIDE SEQUENCE [LARGE SCALE GENOMIC DNA]</scope>
    <source>
        <strain>Berkeley</strain>
    </source>
</reference>
<reference key="3">
    <citation type="journal article" date="2001" name="Mol. Cell">
        <title>Reconstitution of a functional core polycomb repressive complex.</title>
        <authorList>
            <person name="Francis N.J."/>
            <person name="Saurin A.J."/>
            <person name="Shao Z."/>
            <person name="Kingston R.E."/>
        </authorList>
    </citation>
    <scope>IDENTIFICATION IN A PCG COMPLEX WITH PC; PH AND PSC</scope>
</reference>
<reference key="4">
    <citation type="journal article" date="2002" name="Genome Biol.">
        <title>Annotation of the Drosophila melanogaster euchromatic genome: a systematic review.</title>
        <authorList>
            <person name="Misra S."/>
            <person name="Crosby M.A."/>
            <person name="Mungall C.J."/>
            <person name="Matthews B.B."/>
            <person name="Campbell K.S."/>
            <person name="Hradecky P."/>
            <person name="Huang Y."/>
            <person name="Kaminker J.S."/>
            <person name="Millburn G.H."/>
            <person name="Prochnik S.E."/>
            <person name="Smith C.D."/>
            <person name="Tupy J.L."/>
            <person name="Whitfield E.J."/>
            <person name="Bayraktaroglu L."/>
            <person name="Berman B.P."/>
            <person name="Bettencourt B.R."/>
            <person name="Celniker S.E."/>
            <person name="de Grey A.D.N.J."/>
            <person name="Drysdale R.A."/>
            <person name="Harris N.L."/>
            <person name="Richter J."/>
            <person name="Russo S."/>
            <person name="Schroeder A.J."/>
            <person name="Shu S.Q."/>
            <person name="Stapleton M."/>
            <person name="Yamada C."/>
            <person name="Ashburner M."/>
            <person name="Gelbart W.M."/>
            <person name="Rubin G.M."/>
            <person name="Lewis S.E."/>
        </authorList>
    </citation>
    <scope>GENOME REANNOTATION</scope>
    <source>
        <strain>Berkeley</strain>
    </source>
</reference>
<reference key="5">
    <citation type="journal article" date="2002" name="Genome Biol.">
        <title>A Drosophila full-length cDNA resource.</title>
        <authorList>
            <person name="Stapleton M."/>
            <person name="Carlson J.W."/>
            <person name="Brokstein P."/>
            <person name="Yu C."/>
            <person name="Champe M."/>
            <person name="George R.A."/>
            <person name="Guarin H."/>
            <person name="Kronmiller B."/>
            <person name="Pacleb J.M."/>
            <person name="Park S."/>
            <person name="Wan K.H."/>
            <person name="Rubin G.M."/>
            <person name="Celniker S.E."/>
        </authorList>
    </citation>
    <scope>NUCLEOTIDE SEQUENCE [LARGE SCALE MRNA]</scope>
    <source>
        <strain>Berkeley</strain>
        <tissue>Embryo</tissue>
    </source>
</reference>
<reference key="6">
    <citation type="journal article" date="2001" name="Nature">
        <title>A Drosophila Polycomb group complex includes Zeste and dTAFII proteins.</title>
        <authorList>
            <person name="Saurin A.J."/>
            <person name="Shao Z."/>
            <person name="Erdjument-Bromage H."/>
            <person name="Tempst P."/>
            <person name="Kingston R.E."/>
        </authorList>
    </citation>
    <scope>IDENTIFICATION IN THE PRC1 COMPLEX WITH PC; PSC AND PH</scope>
</reference>
<reference key="7">
    <citation type="journal article" date="2003" name="Mech. Dev.">
        <title>Molecular and genetic analysis of the Polycomb group gene Sex combs extra/Ring in Drosophila.</title>
        <authorList>
            <person name="Fritsch C."/>
            <person name="Beuchle D."/>
            <person name="Mueller J."/>
        </authorList>
    </citation>
    <scope>CHARACTERIZATION</scope>
    <scope>MUTANT SCE33M2</scope>
</reference>
<reference key="8">
    <citation type="journal article" date="2004" name="Mech. Dev.">
        <title>The Drosophila Polycomb group gene Sex combs extra encodes the ortholog of mammalian Ring1 proteins.</title>
        <authorList>
            <person name="Gorfinkiel N."/>
            <person name="Fanti L."/>
            <person name="Melgar T."/>
            <person name="Garcia E."/>
            <person name="Pimpinelli S."/>
            <person name="Guerrero I."/>
            <person name="Vidal M."/>
        </authorList>
    </citation>
    <scope>CHARACTERIZATION</scope>
    <scope>SUBCELLULAR LOCATION</scope>
    <scope>TISSUE SPECIFICITY</scope>
    <scope>DEVELOPMENTAL STAGE</scope>
    <scope>INTERACTION WITH PSC</scope>
</reference>
<reference key="9">
    <citation type="journal article" date="2004" name="Science">
        <title>Chromatin compaction by a polycomb group protein complex.</title>
        <authorList>
            <person name="Francis N.J."/>
            <person name="Kingston R.E."/>
            <person name="Woodcock C.L."/>
        </authorList>
    </citation>
    <scope>FUNCTION OF THE PCG COMPLEX</scope>
</reference>
<reference key="10">
    <citation type="journal article" date="2004" name="Mol. Cell">
        <title>Propagation of silencing; recruitment and repression of naive chromatin in trans by polycomb repressed chromatin.</title>
        <authorList>
            <person name="Lavigne M."/>
            <person name="Francis N.J."/>
            <person name="King I.F."/>
            <person name="Kingston R.E."/>
        </authorList>
    </citation>
    <scope>FUNCTION OF THE PCG COMPLEX</scope>
</reference>
<reference key="11">
    <citation type="journal article" date="2004" name="Nature">
        <title>Role of histone H2A ubiquitination in Polycomb silencing.</title>
        <authorList>
            <person name="Wang H."/>
            <person name="Wang L."/>
            <person name="Erdjument-Bromage H."/>
            <person name="Vidal M."/>
            <person name="Tempst P."/>
            <person name="Jones R.S."/>
            <person name="Zhang Y."/>
        </authorList>
    </citation>
    <scope>FUNCTION</scope>
    <scope>SUBCELLULAR LOCATION</scope>
    <scope>MUTAGENESIS OF ARG-65</scope>
</reference>
<reference key="12">
    <citation type="journal article" date="2004" name="Chromosoma">
        <title>A proposed role for the Polycomb group protein dRING in meiotic sister-chromatid cohesion.</title>
        <authorList>
            <person name="Balicky E.M."/>
            <person name="Young L."/>
            <person name="Orr-Weaver T.L."/>
            <person name="Bickel S.E."/>
        </authorList>
    </citation>
    <scope>FUNCTION</scope>
    <scope>TISSUE SPECIFICITY</scope>
    <scope>INTERACTION WITH ORD</scope>
</reference>
<reference key="13">
    <citation type="journal article" date="2008" name="J. Proteome Res.">
        <title>Phosphoproteome analysis of Drosophila melanogaster embryos.</title>
        <authorList>
            <person name="Zhai B."/>
            <person name="Villen J."/>
            <person name="Beausoleil S.A."/>
            <person name="Mintseris J."/>
            <person name="Gygi S.P."/>
        </authorList>
    </citation>
    <scope>PHOSPHORYLATION [LARGE SCALE ANALYSIS] AT SER-202; SER-266; THR-267 AND SER-269</scope>
    <scope>IDENTIFICATION BY MASS SPECTROMETRY</scope>
    <source>
        <tissue>Embryo</tissue>
    </source>
</reference>